<keyword id="KW-1185">Reference proteome</keyword>
<keyword id="KW-0687">Ribonucleoprotein</keyword>
<keyword id="KW-0689">Ribosomal protein</keyword>
<keyword id="KW-0694">RNA-binding</keyword>
<keyword id="KW-0699">rRNA-binding</keyword>
<comment type="function">
    <text evidence="1">Binds to the 23S rRNA.</text>
</comment>
<comment type="subunit">
    <text evidence="1">Part of the 50S ribosomal subunit.</text>
</comment>
<comment type="similarity">
    <text evidence="1">Belongs to the universal ribosomal protein uL15 family.</text>
</comment>
<organism>
    <name type="scientific">Coxiella burnetii (strain RSA 493 / Nine Mile phase I)</name>
    <dbReference type="NCBI Taxonomy" id="227377"/>
    <lineage>
        <taxon>Bacteria</taxon>
        <taxon>Pseudomonadati</taxon>
        <taxon>Pseudomonadota</taxon>
        <taxon>Gammaproteobacteria</taxon>
        <taxon>Legionellales</taxon>
        <taxon>Coxiellaceae</taxon>
        <taxon>Coxiella</taxon>
    </lineage>
</organism>
<gene>
    <name evidence="1" type="primary">rplO</name>
    <name type="ordered locus">CBU_0257</name>
</gene>
<name>RL15_COXBU</name>
<dbReference type="EMBL" id="AE016828">
    <property type="protein sequence ID" value="AAO89815.1"/>
    <property type="molecule type" value="Genomic_DNA"/>
</dbReference>
<dbReference type="RefSeq" id="NP_819301.1">
    <property type="nucleotide sequence ID" value="NC_002971.4"/>
</dbReference>
<dbReference type="RefSeq" id="WP_010957463.1">
    <property type="nucleotide sequence ID" value="NZ_CDBG01000001.1"/>
</dbReference>
<dbReference type="SMR" id="Q83EQ7"/>
<dbReference type="STRING" id="227377.CBU_0257"/>
<dbReference type="DNASU" id="1208138"/>
<dbReference type="EnsemblBacteria" id="AAO89815">
    <property type="protein sequence ID" value="AAO89815"/>
    <property type="gene ID" value="CBU_0257"/>
</dbReference>
<dbReference type="GeneID" id="1208138"/>
<dbReference type="KEGG" id="cbu:CBU_0257"/>
<dbReference type="PATRIC" id="fig|227377.7.peg.252"/>
<dbReference type="eggNOG" id="COG0200">
    <property type="taxonomic scope" value="Bacteria"/>
</dbReference>
<dbReference type="HOGENOM" id="CLU_055188_4_2_6"/>
<dbReference type="OrthoDB" id="9810293at2"/>
<dbReference type="Proteomes" id="UP000002671">
    <property type="component" value="Chromosome"/>
</dbReference>
<dbReference type="GO" id="GO:0022625">
    <property type="term" value="C:cytosolic large ribosomal subunit"/>
    <property type="evidence" value="ECO:0000318"/>
    <property type="project" value="GO_Central"/>
</dbReference>
<dbReference type="GO" id="GO:0019843">
    <property type="term" value="F:rRNA binding"/>
    <property type="evidence" value="ECO:0007669"/>
    <property type="project" value="UniProtKB-UniRule"/>
</dbReference>
<dbReference type="GO" id="GO:0003735">
    <property type="term" value="F:structural constituent of ribosome"/>
    <property type="evidence" value="ECO:0000318"/>
    <property type="project" value="GO_Central"/>
</dbReference>
<dbReference type="GO" id="GO:0006412">
    <property type="term" value="P:translation"/>
    <property type="evidence" value="ECO:0007669"/>
    <property type="project" value="UniProtKB-UniRule"/>
</dbReference>
<dbReference type="Gene3D" id="3.100.10.10">
    <property type="match status" value="1"/>
</dbReference>
<dbReference type="HAMAP" id="MF_01341">
    <property type="entry name" value="Ribosomal_uL15"/>
    <property type="match status" value="1"/>
</dbReference>
<dbReference type="InterPro" id="IPR030878">
    <property type="entry name" value="Ribosomal_uL15"/>
</dbReference>
<dbReference type="InterPro" id="IPR021131">
    <property type="entry name" value="Ribosomal_uL15/eL18"/>
</dbReference>
<dbReference type="InterPro" id="IPR036227">
    <property type="entry name" value="Ribosomal_uL15/eL18_sf"/>
</dbReference>
<dbReference type="InterPro" id="IPR005749">
    <property type="entry name" value="Ribosomal_uL15_bac-type"/>
</dbReference>
<dbReference type="NCBIfam" id="TIGR01071">
    <property type="entry name" value="rplO_bact"/>
    <property type="match status" value="1"/>
</dbReference>
<dbReference type="PANTHER" id="PTHR12934">
    <property type="entry name" value="50S RIBOSOMAL PROTEIN L15"/>
    <property type="match status" value="1"/>
</dbReference>
<dbReference type="PANTHER" id="PTHR12934:SF11">
    <property type="entry name" value="LARGE RIBOSOMAL SUBUNIT PROTEIN UL15M"/>
    <property type="match status" value="1"/>
</dbReference>
<dbReference type="Pfam" id="PF00828">
    <property type="entry name" value="Ribosomal_L27A"/>
    <property type="match status" value="1"/>
</dbReference>
<dbReference type="SUPFAM" id="SSF52080">
    <property type="entry name" value="Ribosomal proteins L15p and L18e"/>
    <property type="match status" value="1"/>
</dbReference>
<sequence>MQLNDLKPAKGARHQKLRVGRGIGSGKGKTAGRGHKGQHSRAGGYHKVGFEGGQMPLQRRVPKFGFTSRKELISAEVRLGELNKISGDVVDLASLKAANIISRQIKRVKIFAAGKLEKPVTIRGLRVTKGVKAAVEAAGGKIE</sequence>
<reference key="1">
    <citation type="journal article" date="2003" name="Proc. Natl. Acad. Sci. U.S.A.">
        <title>Complete genome sequence of the Q-fever pathogen, Coxiella burnetii.</title>
        <authorList>
            <person name="Seshadri R."/>
            <person name="Paulsen I.T."/>
            <person name="Eisen J.A."/>
            <person name="Read T.D."/>
            <person name="Nelson K.E."/>
            <person name="Nelson W.C."/>
            <person name="Ward N.L."/>
            <person name="Tettelin H."/>
            <person name="Davidsen T.M."/>
            <person name="Beanan M.J."/>
            <person name="DeBoy R.T."/>
            <person name="Daugherty S.C."/>
            <person name="Brinkac L.M."/>
            <person name="Madupu R."/>
            <person name="Dodson R.J."/>
            <person name="Khouri H.M."/>
            <person name="Lee K.H."/>
            <person name="Carty H.A."/>
            <person name="Scanlan D."/>
            <person name="Heinzen R.A."/>
            <person name="Thompson H.A."/>
            <person name="Samuel J.E."/>
            <person name="Fraser C.M."/>
            <person name="Heidelberg J.F."/>
        </authorList>
    </citation>
    <scope>NUCLEOTIDE SEQUENCE [LARGE SCALE GENOMIC DNA]</scope>
    <source>
        <strain>RSA 493 / Nine Mile phase I</strain>
    </source>
</reference>
<protein>
    <recommendedName>
        <fullName evidence="1">Large ribosomal subunit protein uL15</fullName>
    </recommendedName>
    <alternativeName>
        <fullName evidence="3">50S ribosomal protein L15</fullName>
    </alternativeName>
</protein>
<accession>Q83EQ7</accession>
<proteinExistence type="inferred from homology"/>
<feature type="chain" id="PRO_0000104712" description="Large ribosomal subunit protein uL15">
    <location>
        <begin position="1"/>
        <end position="143"/>
    </location>
</feature>
<feature type="region of interest" description="Disordered" evidence="2">
    <location>
        <begin position="20"/>
        <end position="52"/>
    </location>
</feature>
<feature type="compositionally biased region" description="Basic residues" evidence="2">
    <location>
        <begin position="30"/>
        <end position="39"/>
    </location>
</feature>
<evidence type="ECO:0000255" key="1">
    <source>
        <dbReference type="HAMAP-Rule" id="MF_01341"/>
    </source>
</evidence>
<evidence type="ECO:0000256" key="2">
    <source>
        <dbReference type="SAM" id="MobiDB-lite"/>
    </source>
</evidence>
<evidence type="ECO:0000305" key="3"/>